<evidence type="ECO:0000255" key="1">
    <source>
        <dbReference type="HAMAP-Rule" id="MF_01331"/>
    </source>
</evidence>
<evidence type="ECO:0000256" key="2">
    <source>
        <dbReference type="SAM" id="MobiDB-lite"/>
    </source>
</evidence>
<evidence type="ECO:0000305" key="3"/>
<proteinExistence type="inferred from homology"/>
<comment type="function">
    <text evidence="1">This protein binds specifically to 23S rRNA; its binding is stimulated by other ribosomal proteins, e.g. L4, L17, and L20. It is important during the early stages of 50S assembly. It makes multiple contacts with different domains of the 23S rRNA in the assembled 50S subunit and ribosome (By similarity).</text>
</comment>
<comment type="function">
    <text evidence="1">The globular domain of the protein is located near the polypeptide exit tunnel on the outside of the subunit, while an extended beta-hairpin is found that lines the wall of the exit tunnel in the center of the 70S ribosome.</text>
</comment>
<comment type="subunit">
    <text evidence="1">Part of the 50S ribosomal subunit.</text>
</comment>
<comment type="similarity">
    <text evidence="1">Belongs to the universal ribosomal protein uL22 family.</text>
</comment>
<organism>
    <name type="scientific">Campylobacter concisus (strain 13826)</name>
    <dbReference type="NCBI Taxonomy" id="360104"/>
    <lineage>
        <taxon>Bacteria</taxon>
        <taxon>Pseudomonadati</taxon>
        <taxon>Campylobacterota</taxon>
        <taxon>Epsilonproteobacteria</taxon>
        <taxon>Campylobacterales</taxon>
        <taxon>Campylobacteraceae</taxon>
        <taxon>Campylobacter</taxon>
    </lineage>
</organism>
<dbReference type="EMBL" id="CP000792">
    <property type="protein sequence ID" value="ABV23529.2"/>
    <property type="molecule type" value="Genomic_DNA"/>
</dbReference>
<dbReference type="RefSeq" id="WP_009295259.1">
    <property type="nucleotide sequence ID" value="NC_009802.2"/>
</dbReference>
<dbReference type="SMR" id="A7ZG07"/>
<dbReference type="STRING" id="360104.CCC13826_2324"/>
<dbReference type="KEGG" id="cco:CCC13826_2324"/>
<dbReference type="eggNOG" id="COG0091">
    <property type="taxonomic scope" value="Bacteria"/>
</dbReference>
<dbReference type="HOGENOM" id="CLU_083987_3_2_7"/>
<dbReference type="OrthoDB" id="9805969at2"/>
<dbReference type="Proteomes" id="UP000001121">
    <property type="component" value="Chromosome"/>
</dbReference>
<dbReference type="GO" id="GO:0022625">
    <property type="term" value="C:cytosolic large ribosomal subunit"/>
    <property type="evidence" value="ECO:0007669"/>
    <property type="project" value="TreeGrafter"/>
</dbReference>
<dbReference type="GO" id="GO:0019843">
    <property type="term" value="F:rRNA binding"/>
    <property type="evidence" value="ECO:0007669"/>
    <property type="project" value="UniProtKB-UniRule"/>
</dbReference>
<dbReference type="GO" id="GO:0003735">
    <property type="term" value="F:structural constituent of ribosome"/>
    <property type="evidence" value="ECO:0007669"/>
    <property type="project" value="InterPro"/>
</dbReference>
<dbReference type="GO" id="GO:0006412">
    <property type="term" value="P:translation"/>
    <property type="evidence" value="ECO:0007669"/>
    <property type="project" value="UniProtKB-UniRule"/>
</dbReference>
<dbReference type="CDD" id="cd00336">
    <property type="entry name" value="Ribosomal_L22"/>
    <property type="match status" value="1"/>
</dbReference>
<dbReference type="Gene3D" id="3.90.470.10">
    <property type="entry name" value="Ribosomal protein L22/L17"/>
    <property type="match status" value="1"/>
</dbReference>
<dbReference type="HAMAP" id="MF_01331_B">
    <property type="entry name" value="Ribosomal_uL22_B"/>
    <property type="match status" value="1"/>
</dbReference>
<dbReference type="InterPro" id="IPR001063">
    <property type="entry name" value="Ribosomal_uL22"/>
</dbReference>
<dbReference type="InterPro" id="IPR005727">
    <property type="entry name" value="Ribosomal_uL22_bac/chlpt-type"/>
</dbReference>
<dbReference type="InterPro" id="IPR047867">
    <property type="entry name" value="Ribosomal_uL22_bac/org-type"/>
</dbReference>
<dbReference type="InterPro" id="IPR036394">
    <property type="entry name" value="Ribosomal_uL22_sf"/>
</dbReference>
<dbReference type="NCBIfam" id="TIGR01044">
    <property type="entry name" value="rplV_bact"/>
    <property type="match status" value="1"/>
</dbReference>
<dbReference type="PANTHER" id="PTHR13501">
    <property type="entry name" value="CHLOROPLAST 50S RIBOSOMAL PROTEIN L22-RELATED"/>
    <property type="match status" value="1"/>
</dbReference>
<dbReference type="PANTHER" id="PTHR13501:SF8">
    <property type="entry name" value="LARGE RIBOSOMAL SUBUNIT PROTEIN UL22M"/>
    <property type="match status" value="1"/>
</dbReference>
<dbReference type="Pfam" id="PF00237">
    <property type="entry name" value="Ribosomal_L22"/>
    <property type="match status" value="1"/>
</dbReference>
<dbReference type="SUPFAM" id="SSF54843">
    <property type="entry name" value="Ribosomal protein L22"/>
    <property type="match status" value="1"/>
</dbReference>
<sequence length="110" mass="11948">MSKAIIKFVRLSPTKARLIAREVQGMNAELALASLQFMPNRGAKFIANAISSAVANGGFEPEEVVVTSCRVDAGPVLKRFRPRARGTASKIRKPTSHVMVEVSKPEKKEA</sequence>
<reference key="1">
    <citation type="submission" date="2007-10" db="EMBL/GenBank/DDBJ databases">
        <title>Genome sequence of Campylobacter concisus 13826 isolated from human feces.</title>
        <authorList>
            <person name="Fouts D.E."/>
            <person name="Mongodin E.F."/>
            <person name="Puiu D."/>
            <person name="Sebastian Y."/>
            <person name="Miller W.G."/>
            <person name="Mandrell R.E."/>
            <person name="On S."/>
            <person name="Nelson K.E."/>
        </authorList>
    </citation>
    <scope>NUCLEOTIDE SEQUENCE [LARGE SCALE GENOMIC DNA]</scope>
    <source>
        <strain>13826</strain>
    </source>
</reference>
<feature type="chain" id="PRO_1000073276" description="Large ribosomal subunit protein uL22">
    <location>
        <begin position="1"/>
        <end position="110"/>
    </location>
</feature>
<feature type="region of interest" description="Disordered" evidence="2">
    <location>
        <begin position="84"/>
        <end position="110"/>
    </location>
</feature>
<feature type="compositionally biased region" description="Basic residues" evidence="2">
    <location>
        <begin position="84"/>
        <end position="95"/>
    </location>
</feature>
<accession>A7ZG07</accession>
<name>RL22_CAMC1</name>
<keyword id="KW-0687">Ribonucleoprotein</keyword>
<keyword id="KW-0689">Ribosomal protein</keyword>
<keyword id="KW-0694">RNA-binding</keyword>
<keyword id="KW-0699">rRNA-binding</keyword>
<protein>
    <recommendedName>
        <fullName evidence="1">Large ribosomal subunit protein uL22</fullName>
    </recommendedName>
    <alternativeName>
        <fullName evidence="3">50S ribosomal protein L22</fullName>
    </alternativeName>
</protein>
<gene>
    <name evidence="1" type="primary">rplV</name>
    <name type="ordered locus">Ccon26_18800</name>
    <name type="ORF">CCC13826_2324</name>
</gene>